<comment type="function">
    <text evidence="1">Together with the chaperonin GroEL, plays an essential role in assisting protein folding. The GroEL-GroES system forms a nano-cage that allows encapsulation of the non-native substrate proteins and provides a physical environment optimized to promote and accelerate protein folding. GroES binds to the apical surface of the GroEL ring, thereby capping the opening of the GroEL channel.</text>
</comment>
<comment type="subunit">
    <text evidence="1">Heptamer of 7 subunits arranged in a ring. Interacts with the chaperonin GroEL.</text>
</comment>
<comment type="subcellular location">
    <subcellularLocation>
        <location evidence="1">Cytoplasm</location>
    </subcellularLocation>
</comment>
<comment type="similarity">
    <text evidence="1">Belongs to the GroES chaperonin family.</text>
</comment>
<keyword id="KW-0143">Chaperone</keyword>
<keyword id="KW-0963">Cytoplasm</keyword>
<name>CH10_PSEPG</name>
<dbReference type="EMBL" id="CP000926">
    <property type="protein sequence ID" value="ABZ00376.1"/>
    <property type="molecule type" value="Genomic_DNA"/>
</dbReference>
<dbReference type="RefSeq" id="WP_012274036.1">
    <property type="nucleotide sequence ID" value="NC_010322.1"/>
</dbReference>
<dbReference type="SMR" id="B0KFQ3"/>
<dbReference type="KEGG" id="ppg:PputGB1_4489"/>
<dbReference type="eggNOG" id="COG0234">
    <property type="taxonomic scope" value="Bacteria"/>
</dbReference>
<dbReference type="HOGENOM" id="CLU_132825_2_0_6"/>
<dbReference type="Proteomes" id="UP000002157">
    <property type="component" value="Chromosome"/>
</dbReference>
<dbReference type="GO" id="GO:0005737">
    <property type="term" value="C:cytoplasm"/>
    <property type="evidence" value="ECO:0007669"/>
    <property type="project" value="UniProtKB-SubCell"/>
</dbReference>
<dbReference type="GO" id="GO:0005524">
    <property type="term" value="F:ATP binding"/>
    <property type="evidence" value="ECO:0007669"/>
    <property type="project" value="InterPro"/>
</dbReference>
<dbReference type="GO" id="GO:0046872">
    <property type="term" value="F:metal ion binding"/>
    <property type="evidence" value="ECO:0007669"/>
    <property type="project" value="TreeGrafter"/>
</dbReference>
<dbReference type="GO" id="GO:0044183">
    <property type="term" value="F:protein folding chaperone"/>
    <property type="evidence" value="ECO:0007669"/>
    <property type="project" value="InterPro"/>
</dbReference>
<dbReference type="GO" id="GO:0051087">
    <property type="term" value="F:protein-folding chaperone binding"/>
    <property type="evidence" value="ECO:0007669"/>
    <property type="project" value="TreeGrafter"/>
</dbReference>
<dbReference type="GO" id="GO:0051082">
    <property type="term" value="F:unfolded protein binding"/>
    <property type="evidence" value="ECO:0007669"/>
    <property type="project" value="TreeGrafter"/>
</dbReference>
<dbReference type="GO" id="GO:0051085">
    <property type="term" value="P:chaperone cofactor-dependent protein refolding"/>
    <property type="evidence" value="ECO:0007669"/>
    <property type="project" value="TreeGrafter"/>
</dbReference>
<dbReference type="CDD" id="cd00320">
    <property type="entry name" value="cpn10"/>
    <property type="match status" value="1"/>
</dbReference>
<dbReference type="FunFam" id="2.30.33.40:FF:000001">
    <property type="entry name" value="10 kDa chaperonin"/>
    <property type="match status" value="1"/>
</dbReference>
<dbReference type="Gene3D" id="2.30.33.40">
    <property type="entry name" value="GroES chaperonin"/>
    <property type="match status" value="1"/>
</dbReference>
<dbReference type="HAMAP" id="MF_00580">
    <property type="entry name" value="CH10"/>
    <property type="match status" value="1"/>
</dbReference>
<dbReference type="InterPro" id="IPR020818">
    <property type="entry name" value="Chaperonin_GroES"/>
</dbReference>
<dbReference type="InterPro" id="IPR037124">
    <property type="entry name" value="Chaperonin_GroES_sf"/>
</dbReference>
<dbReference type="InterPro" id="IPR018369">
    <property type="entry name" value="Chaprnonin_Cpn10_CS"/>
</dbReference>
<dbReference type="InterPro" id="IPR011032">
    <property type="entry name" value="GroES-like_sf"/>
</dbReference>
<dbReference type="NCBIfam" id="NF001526">
    <property type="entry name" value="PRK00364.1-1"/>
    <property type="match status" value="1"/>
</dbReference>
<dbReference type="NCBIfam" id="NF001527">
    <property type="entry name" value="PRK00364.1-2"/>
    <property type="match status" value="1"/>
</dbReference>
<dbReference type="NCBIfam" id="NF001531">
    <property type="entry name" value="PRK00364.2-2"/>
    <property type="match status" value="1"/>
</dbReference>
<dbReference type="NCBIfam" id="NF001533">
    <property type="entry name" value="PRK00364.2-4"/>
    <property type="match status" value="1"/>
</dbReference>
<dbReference type="PANTHER" id="PTHR10772">
    <property type="entry name" value="10 KDA HEAT SHOCK PROTEIN"/>
    <property type="match status" value="1"/>
</dbReference>
<dbReference type="PANTHER" id="PTHR10772:SF58">
    <property type="entry name" value="CO-CHAPERONIN GROES"/>
    <property type="match status" value="1"/>
</dbReference>
<dbReference type="Pfam" id="PF00166">
    <property type="entry name" value="Cpn10"/>
    <property type="match status" value="1"/>
</dbReference>
<dbReference type="PRINTS" id="PR00297">
    <property type="entry name" value="CHAPERONIN10"/>
</dbReference>
<dbReference type="SMART" id="SM00883">
    <property type="entry name" value="Cpn10"/>
    <property type="match status" value="1"/>
</dbReference>
<dbReference type="SUPFAM" id="SSF50129">
    <property type="entry name" value="GroES-like"/>
    <property type="match status" value="1"/>
</dbReference>
<dbReference type="PROSITE" id="PS00681">
    <property type="entry name" value="CHAPERONINS_CPN10"/>
    <property type="match status" value="1"/>
</dbReference>
<sequence length="97" mass="10266">MKLRPLHDRVVIRRSEEESKTAGGIVLPGSAAEKPNRGEVVAVGTGRILENGEVRALAVKVGDKVVFGPYSGSNTVKVDGEDLLVMAENEILAVIEG</sequence>
<feature type="chain" id="PRO_1000082388" description="Co-chaperonin GroES">
    <location>
        <begin position="1"/>
        <end position="97"/>
    </location>
</feature>
<accession>B0KFQ3</accession>
<protein>
    <recommendedName>
        <fullName evidence="1">Co-chaperonin GroES</fullName>
    </recommendedName>
    <alternativeName>
        <fullName evidence="1">10 kDa chaperonin</fullName>
    </alternativeName>
    <alternativeName>
        <fullName evidence="1">Chaperonin-10</fullName>
        <shortName evidence="1">Cpn10</shortName>
    </alternativeName>
</protein>
<organism>
    <name type="scientific">Pseudomonas putida (strain GB-1)</name>
    <dbReference type="NCBI Taxonomy" id="76869"/>
    <lineage>
        <taxon>Bacteria</taxon>
        <taxon>Pseudomonadati</taxon>
        <taxon>Pseudomonadota</taxon>
        <taxon>Gammaproteobacteria</taxon>
        <taxon>Pseudomonadales</taxon>
        <taxon>Pseudomonadaceae</taxon>
        <taxon>Pseudomonas</taxon>
    </lineage>
</organism>
<gene>
    <name evidence="1" type="primary">groES</name>
    <name evidence="1" type="synonym">groS</name>
    <name type="ordered locus">PputGB1_4489</name>
</gene>
<evidence type="ECO:0000255" key="1">
    <source>
        <dbReference type="HAMAP-Rule" id="MF_00580"/>
    </source>
</evidence>
<proteinExistence type="inferred from homology"/>
<reference key="1">
    <citation type="submission" date="2008-01" db="EMBL/GenBank/DDBJ databases">
        <title>Complete sequence of Pseudomonas putida GB-1.</title>
        <authorList>
            <consortium name="US DOE Joint Genome Institute"/>
            <person name="Copeland A."/>
            <person name="Lucas S."/>
            <person name="Lapidus A."/>
            <person name="Barry K."/>
            <person name="Glavina del Rio T."/>
            <person name="Dalin E."/>
            <person name="Tice H."/>
            <person name="Pitluck S."/>
            <person name="Bruce D."/>
            <person name="Goodwin L."/>
            <person name="Chertkov O."/>
            <person name="Brettin T."/>
            <person name="Detter J.C."/>
            <person name="Han C."/>
            <person name="Kuske C.R."/>
            <person name="Schmutz J."/>
            <person name="Larimer F."/>
            <person name="Land M."/>
            <person name="Hauser L."/>
            <person name="Kyrpides N."/>
            <person name="Kim E."/>
            <person name="McCarthy J.K."/>
            <person name="Richardson P."/>
        </authorList>
    </citation>
    <scope>NUCLEOTIDE SEQUENCE [LARGE SCALE GENOMIC DNA]</scope>
    <source>
        <strain>GB-1</strain>
    </source>
</reference>